<gene>
    <name evidence="1" type="primary">ulaF</name>
    <name type="ordered locus">SPA4205</name>
</gene>
<keyword id="KW-0119">Carbohydrate metabolism</keyword>
<keyword id="KW-0413">Isomerase</keyword>
<keyword id="KW-0479">Metal-binding</keyword>
<keyword id="KW-0862">Zinc</keyword>
<organism>
    <name type="scientific">Salmonella paratyphi A (strain ATCC 9150 / SARB42)</name>
    <dbReference type="NCBI Taxonomy" id="295319"/>
    <lineage>
        <taxon>Bacteria</taxon>
        <taxon>Pseudomonadati</taxon>
        <taxon>Pseudomonadota</taxon>
        <taxon>Gammaproteobacteria</taxon>
        <taxon>Enterobacterales</taxon>
        <taxon>Enterobacteriaceae</taxon>
        <taxon>Salmonella</taxon>
    </lineage>
</organism>
<feature type="chain" id="PRO_0000233245" description="L-ribulose-5-phosphate 4-epimerase UlaF">
    <location>
        <begin position="1"/>
        <end position="228"/>
    </location>
</feature>
<feature type="active site" description="Proton donor/acceptor" evidence="1">
    <location>
        <position position="118"/>
    </location>
</feature>
<feature type="active site" description="Proton donor/acceptor" evidence="1">
    <location>
        <position position="225"/>
    </location>
</feature>
<feature type="binding site" evidence="1">
    <location>
        <begin position="26"/>
        <end position="27"/>
    </location>
    <ligand>
        <name>substrate</name>
    </ligand>
</feature>
<feature type="binding site" evidence="1">
    <location>
        <begin position="43"/>
        <end position="44"/>
    </location>
    <ligand>
        <name>substrate</name>
    </ligand>
</feature>
<feature type="binding site" evidence="1">
    <location>
        <begin position="72"/>
        <end position="73"/>
    </location>
    <ligand>
        <name>substrate</name>
    </ligand>
</feature>
<feature type="binding site" evidence="1">
    <location>
        <position position="74"/>
    </location>
    <ligand>
        <name>Zn(2+)</name>
        <dbReference type="ChEBI" id="CHEBI:29105"/>
    </ligand>
</feature>
<feature type="binding site" evidence="1">
    <location>
        <position position="93"/>
    </location>
    <ligand>
        <name>Zn(2+)</name>
        <dbReference type="ChEBI" id="CHEBI:29105"/>
    </ligand>
</feature>
<feature type="binding site" evidence="1">
    <location>
        <position position="95"/>
    </location>
    <ligand>
        <name>Zn(2+)</name>
        <dbReference type="ChEBI" id="CHEBI:29105"/>
    </ligand>
</feature>
<feature type="binding site" evidence="1">
    <location>
        <position position="167"/>
    </location>
    <ligand>
        <name>Zn(2+)</name>
        <dbReference type="ChEBI" id="CHEBI:29105"/>
    </ligand>
</feature>
<accession>Q5PJ61</accession>
<name>ULAF_SALPA</name>
<protein>
    <recommendedName>
        <fullName evidence="1">L-ribulose-5-phosphate 4-epimerase UlaF</fullName>
        <ecNumber evidence="1">5.1.3.4</ecNumber>
    </recommendedName>
    <alternativeName>
        <fullName evidence="1">L-ascorbate utilization protein F</fullName>
    </alternativeName>
    <alternativeName>
        <fullName evidence="1">Phosphoribulose isomerase</fullName>
    </alternativeName>
</protein>
<comment type="function">
    <text evidence="1">Catalyzes the isomerization of L-ribulose 5-phosphate to D-xylulose 5-phosphate. Is involved in the anaerobic L-ascorbate utilization.</text>
</comment>
<comment type="catalytic activity">
    <reaction evidence="1">
        <text>L-ribulose 5-phosphate = D-xylulose 5-phosphate</text>
        <dbReference type="Rhea" id="RHEA:22368"/>
        <dbReference type="ChEBI" id="CHEBI:57737"/>
        <dbReference type="ChEBI" id="CHEBI:58226"/>
        <dbReference type="EC" id="5.1.3.4"/>
    </reaction>
</comment>
<comment type="cofactor">
    <cofactor evidence="1">
        <name>Zn(2+)</name>
        <dbReference type="ChEBI" id="CHEBI:29105"/>
    </cofactor>
    <text evidence="1">Binds 1 zinc ion per subunit.</text>
</comment>
<comment type="pathway">
    <text evidence="1">Cofactor degradation; L-ascorbate degradation; D-xylulose 5-phosphate from L-ascorbate: step 4/4.</text>
</comment>
<comment type="induction">
    <text evidence="1">Induced by L-ascorbate. Repressed by UlaR.</text>
</comment>
<comment type="similarity">
    <text evidence="1">Belongs to the aldolase class II family. AraD/FucA subfamily.</text>
</comment>
<sequence>MQKLKQQVFDANMDLPRYGLVTFTWGNVSAIDRERGLVVIKPSGVAYETMKVDDMVVVDMDGKVVEGRYRPSSDTATHLALYQRYPSLGGVVHTHSTHATAWAQAGMAIPALGTTHADYFFGDIPCTRALSEEEVQGEYELNTGKVIIETLGEVEPLHTPGIVVYQHGPFAWGKDAHDAVHNAVVMEEVARMAWIARGINPGLNPIDDYLMNKHFMRKHGPNAYYGQK</sequence>
<dbReference type="EC" id="5.1.3.4" evidence="1"/>
<dbReference type="EMBL" id="CP000026">
    <property type="protein sequence ID" value="AAV79942.1"/>
    <property type="molecule type" value="Genomic_DNA"/>
</dbReference>
<dbReference type="RefSeq" id="WP_001170772.1">
    <property type="nucleotide sequence ID" value="NC_006511.1"/>
</dbReference>
<dbReference type="SMR" id="Q5PJ61"/>
<dbReference type="KEGG" id="spt:SPA4205"/>
<dbReference type="HOGENOM" id="CLU_006033_5_0_6"/>
<dbReference type="UniPathway" id="UPA00263">
    <property type="reaction ID" value="UER00380"/>
</dbReference>
<dbReference type="Proteomes" id="UP000008185">
    <property type="component" value="Chromosome"/>
</dbReference>
<dbReference type="GO" id="GO:0005829">
    <property type="term" value="C:cytosol"/>
    <property type="evidence" value="ECO:0007669"/>
    <property type="project" value="TreeGrafter"/>
</dbReference>
<dbReference type="GO" id="GO:0016832">
    <property type="term" value="F:aldehyde-lyase activity"/>
    <property type="evidence" value="ECO:0007669"/>
    <property type="project" value="TreeGrafter"/>
</dbReference>
<dbReference type="GO" id="GO:0008742">
    <property type="term" value="F:L-ribulose-phosphate 4-epimerase activity"/>
    <property type="evidence" value="ECO:0007669"/>
    <property type="project" value="UniProtKB-UniRule"/>
</dbReference>
<dbReference type="GO" id="GO:0008270">
    <property type="term" value="F:zinc ion binding"/>
    <property type="evidence" value="ECO:0007669"/>
    <property type="project" value="UniProtKB-UniRule"/>
</dbReference>
<dbReference type="GO" id="GO:0019854">
    <property type="term" value="P:L-ascorbic acid catabolic process"/>
    <property type="evidence" value="ECO:0007669"/>
    <property type="project" value="UniProtKB-UniRule"/>
</dbReference>
<dbReference type="GO" id="GO:0019323">
    <property type="term" value="P:pentose catabolic process"/>
    <property type="evidence" value="ECO:0007669"/>
    <property type="project" value="TreeGrafter"/>
</dbReference>
<dbReference type="CDD" id="cd00398">
    <property type="entry name" value="Aldolase_II"/>
    <property type="match status" value="1"/>
</dbReference>
<dbReference type="FunFam" id="3.40.225.10:FF:000001">
    <property type="entry name" value="L-ribulose-5-phosphate 4-epimerase UlaF"/>
    <property type="match status" value="1"/>
</dbReference>
<dbReference type="Gene3D" id="3.40.225.10">
    <property type="entry name" value="Class II aldolase/adducin N-terminal domain"/>
    <property type="match status" value="1"/>
</dbReference>
<dbReference type="HAMAP" id="MF_01952">
    <property type="entry name" value="UlaF"/>
    <property type="match status" value="1"/>
</dbReference>
<dbReference type="InterPro" id="IPR050197">
    <property type="entry name" value="Aldolase_class_II_sugar_metab"/>
</dbReference>
<dbReference type="InterPro" id="IPR001303">
    <property type="entry name" value="Aldolase_II/adducin_N"/>
</dbReference>
<dbReference type="InterPro" id="IPR036409">
    <property type="entry name" value="Aldolase_II/adducin_N_sf"/>
</dbReference>
<dbReference type="InterPro" id="IPR023499">
    <property type="entry name" value="UlaF"/>
</dbReference>
<dbReference type="NCBIfam" id="NF006047">
    <property type="entry name" value="PRK08193.1"/>
    <property type="match status" value="1"/>
</dbReference>
<dbReference type="NCBIfam" id="NF009003">
    <property type="entry name" value="PRK12348.1"/>
    <property type="match status" value="1"/>
</dbReference>
<dbReference type="PANTHER" id="PTHR22789">
    <property type="entry name" value="FUCULOSE PHOSPHATE ALDOLASE"/>
    <property type="match status" value="1"/>
</dbReference>
<dbReference type="PANTHER" id="PTHR22789:SF9">
    <property type="entry name" value="L-RIBULOSE-5-PHOSPHATE 4-EPIMERASE ULAF"/>
    <property type="match status" value="1"/>
</dbReference>
<dbReference type="Pfam" id="PF00596">
    <property type="entry name" value="Aldolase_II"/>
    <property type="match status" value="1"/>
</dbReference>
<dbReference type="SMART" id="SM01007">
    <property type="entry name" value="Aldolase_II"/>
    <property type="match status" value="1"/>
</dbReference>
<dbReference type="SUPFAM" id="SSF53639">
    <property type="entry name" value="AraD/HMP-PK domain-like"/>
    <property type="match status" value="1"/>
</dbReference>
<reference key="1">
    <citation type="journal article" date="2004" name="Nat. Genet.">
        <title>Comparison of genome degradation in Paratyphi A and Typhi, human-restricted serovars of Salmonella enterica that cause typhoid.</title>
        <authorList>
            <person name="McClelland M."/>
            <person name="Sanderson K.E."/>
            <person name="Clifton S.W."/>
            <person name="Latreille P."/>
            <person name="Porwollik S."/>
            <person name="Sabo A."/>
            <person name="Meyer R."/>
            <person name="Bieri T."/>
            <person name="Ozersky P."/>
            <person name="McLellan M."/>
            <person name="Harkins C.R."/>
            <person name="Wang C."/>
            <person name="Nguyen C."/>
            <person name="Berghoff A."/>
            <person name="Elliott G."/>
            <person name="Kohlberg S."/>
            <person name="Strong C."/>
            <person name="Du F."/>
            <person name="Carter J."/>
            <person name="Kremizki C."/>
            <person name="Layman D."/>
            <person name="Leonard S."/>
            <person name="Sun H."/>
            <person name="Fulton L."/>
            <person name="Nash W."/>
            <person name="Miner T."/>
            <person name="Minx P."/>
            <person name="Delehaunty K."/>
            <person name="Fronick C."/>
            <person name="Magrini V."/>
            <person name="Nhan M."/>
            <person name="Warren W."/>
            <person name="Florea L."/>
            <person name="Spieth J."/>
            <person name="Wilson R.K."/>
        </authorList>
    </citation>
    <scope>NUCLEOTIDE SEQUENCE [LARGE SCALE GENOMIC DNA]</scope>
    <source>
        <strain>ATCC 9150 / SARB42</strain>
    </source>
</reference>
<evidence type="ECO:0000255" key="1">
    <source>
        <dbReference type="HAMAP-Rule" id="MF_01952"/>
    </source>
</evidence>
<proteinExistence type="inferred from homology"/>